<accession>P02598</accession>
<reference key="1">
    <citation type="journal article" date="1992" name="Biochim. Biophys. Acta">
        <title>Calmodulin cDNAs from two species of Tetrahymena.</title>
        <authorList>
            <person name="Takemasa T."/>
            <person name="Takagi T."/>
            <person name="Edamatsu M."/>
            <person name="Watanabe Y."/>
        </authorList>
    </citation>
    <scope>NUCLEOTIDE SEQUENCE [MRNA]</scope>
</reference>
<reference key="2">
    <citation type="journal article" date="1990" name="J. Cell Biol.">
        <title>Analysis of the molecular basis of calmodulin defects that affect ion channel-mediated cellular responses: site-specific mutagenesis and microinjection.</title>
        <authorList>
            <person name="Hinrichsens R."/>
            <person name="Wilson E."/>
            <person name="Lukas T."/>
            <person name="Craig T."/>
            <person name="Schultz J."/>
            <person name="Watterson D.M."/>
        </authorList>
    </citation>
    <scope>PROTEIN SEQUENCE OF 2-149</scope>
</reference>
<reference key="3">
    <citation type="journal article" date="1981" name="Biochem. Biophys. Res. Commun.">
        <title>The amino acid sequence of the Tetrahymena calmodulin which specifically interacts with guanylate cyclase.</title>
        <authorList>
            <person name="Yazawa M."/>
            <person name="Yagi K."/>
            <person name="Toda H."/>
            <person name="Kondo K."/>
            <person name="Narita K."/>
            <person name="Yamazaki R."/>
            <person name="Sobue K."/>
            <person name="Kakiuchi S."/>
            <person name="Nagao S."/>
            <person name="Nozawa Y."/>
        </authorList>
    </citation>
    <scope>PROTEIN SEQUENCE OF 2-149</scope>
    <scope>ACETYLATION AT ALA-2</scope>
    <scope>METHYLATION AT LYS-116</scope>
</reference>
<protein>
    <recommendedName>
        <fullName>Calmodulin</fullName>
        <shortName>CaM</shortName>
    </recommendedName>
</protein>
<evidence type="ECO:0000255" key="1">
    <source>
        <dbReference type="PROSITE-ProRule" id="PRU00448"/>
    </source>
</evidence>
<evidence type="ECO:0000269" key="2">
    <source>
    </source>
</evidence>
<evidence type="ECO:0000269" key="3">
    <source>
    </source>
</evidence>
<evidence type="ECO:0000305" key="4"/>
<sequence length="149" mass="16808">MADQLTEEQIAEFKEAFSLFDKDGDGTITTKELGTVMRSLGQNPTEAELQDMINEVDADGNGTIDFPEFLSLMARKMKDTDTEEELIEAFKVFDRDGNGLISAAELRHVMTNLGEKLTDEEVDEMIREADIDGDGHINYEEFVRMMMAK</sequence>
<proteinExistence type="evidence at protein level"/>
<organism>
    <name type="scientific">Tetrahymena pyriformis</name>
    <dbReference type="NCBI Taxonomy" id="5908"/>
    <lineage>
        <taxon>Eukaryota</taxon>
        <taxon>Sar</taxon>
        <taxon>Alveolata</taxon>
        <taxon>Ciliophora</taxon>
        <taxon>Intramacronucleata</taxon>
        <taxon>Oligohymenophorea</taxon>
        <taxon>Hymenostomatida</taxon>
        <taxon>Tetrahymenina</taxon>
        <taxon>Tetrahymenidae</taxon>
        <taxon>Tetrahymena</taxon>
    </lineage>
</organism>
<name>CALM_TETPY</name>
<dbReference type="EMBL" id="D10521">
    <property type="protein sequence ID" value="BAA01391.1"/>
    <property type="molecule type" value="mRNA"/>
</dbReference>
<dbReference type="PIR" id="S28956">
    <property type="entry name" value="MCTE"/>
</dbReference>
<dbReference type="SMR" id="P02598"/>
<dbReference type="iPTMnet" id="P02598"/>
<dbReference type="GO" id="GO:0016460">
    <property type="term" value="C:myosin II complex"/>
    <property type="evidence" value="ECO:0007669"/>
    <property type="project" value="TreeGrafter"/>
</dbReference>
<dbReference type="GO" id="GO:0005509">
    <property type="term" value="F:calcium ion binding"/>
    <property type="evidence" value="ECO:0007669"/>
    <property type="project" value="InterPro"/>
</dbReference>
<dbReference type="CDD" id="cd00051">
    <property type="entry name" value="EFh"/>
    <property type="match status" value="2"/>
</dbReference>
<dbReference type="FunFam" id="1.10.238.10:FF:000034">
    <property type="entry name" value="Calmodulin"/>
    <property type="match status" value="1"/>
</dbReference>
<dbReference type="FunFam" id="1.10.238.10:FF:000042">
    <property type="entry name" value="Calmodulin"/>
    <property type="match status" value="1"/>
</dbReference>
<dbReference type="Gene3D" id="1.10.238.10">
    <property type="entry name" value="EF-hand"/>
    <property type="match status" value="3"/>
</dbReference>
<dbReference type="InterPro" id="IPR050230">
    <property type="entry name" value="CALM/Myosin/TropC-like"/>
</dbReference>
<dbReference type="InterPro" id="IPR011992">
    <property type="entry name" value="EF-hand-dom_pair"/>
</dbReference>
<dbReference type="InterPro" id="IPR018247">
    <property type="entry name" value="EF_Hand_1_Ca_BS"/>
</dbReference>
<dbReference type="InterPro" id="IPR002048">
    <property type="entry name" value="EF_hand_dom"/>
</dbReference>
<dbReference type="PANTHER" id="PTHR23048:SF0">
    <property type="entry name" value="CALMODULIN LIKE 3"/>
    <property type="match status" value="1"/>
</dbReference>
<dbReference type="PANTHER" id="PTHR23048">
    <property type="entry name" value="MYOSIN LIGHT CHAIN 1, 3"/>
    <property type="match status" value="1"/>
</dbReference>
<dbReference type="Pfam" id="PF13499">
    <property type="entry name" value="EF-hand_7"/>
    <property type="match status" value="2"/>
</dbReference>
<dbReference type="SMART" id="SM00054">
    <property type="entry name" value="EFh"/>
    <property type="match status" value="4"/>
</dbReference>
<dbReference type="SUPFAM" id="SSF47473">
    <property type="entry name" value="EF-hand"/>
    <property type="match status" value="1"/>
</dbReference>
<dbReference type="PROSITE" id="PS00018">
    <property type="entry name" value="EF_HAND_1"/>
    <property type="match status" value="4"/>
</dbReference>
<dbReference type="PROSITE" id="PS50222">
    <property type="entry name" value="EF_HAND_2"/>
    <property type="match status" value="4"/>
</dbReference>
<keyword id="KW-0007">Acetylation</keyword>
<keyword id="KW-0106">Calcium</keyword>
<keyword id="KW-0903">Direct protein sequencing</keyword>
<keyword id="KW-0479">Metal-binding</keyword>
<keyword id="KW-0488">Methylation</keyword>
<keyword id="KW-0677">Repeat</keyword>
<comment type="function">
    <text>Calmodulin mediates the control of a large number of enzymes, ion channels and other proteins by Ca(2+). Among the enzymes to be stimulated by the calmodulin-Ca(2+) complex are a number of protein kinases and phosphatases.</text>
</comment>
<comment type="miscellaneous">
    <text>This protein has four functional calcium-binding sites.</text>
</comment>
<comment type="similarity">
    <text evidence="4">Belongs to the calmodulin family.</text>
</comment>
<feature type="initiator methionine" description="Removed" evidence="2 3">
    <location>
        <position position="1"/>
    </location>
</feature>
<feature type="chain" id="PRO_0000198273" description="Calmodulin">
    <location>
        <begin position="2"/>
        <end position="149"/>
    </location>
</feature>
<feature type="domain" description="EF-hand 1" evidence="1">
    <location>
        <begin position="8"/>
        <end position="43"/>
    </location>
</feature>
<feature type="domain" description="EF-hand 2" evidence="1">
    <location>
        <begin position="44"/>
        <end position="79"/>
    </location>
</feature>
<feature type="domain" description="EF-hand 3" evidence="1">
    <location>
        <begin position="81"/>
        <end position="116"/>
    </location>
</feature>
<feature type="domain" description="EF-hand 4" evidence="1">
    <location>
        <begin position="117"/>
        <end position="149"/>
    </location>
</feature>
<feature type="binding site" evidence="1">
    <location>
        <position position="21"/>
    </location>
    <ligand>
        <name>Ca(2+)</name>
        <dbReference type="ChEBI" id="CHEBI:29108"/>
        <label>1</label>
    </ligand>
</feature>
<feature type="binding site" evidence="1">
    <location>
        <position position="23"/>
    </location>
    <ligand>
        <name>Ca(2+)</name>
        <dbReference type="ChEBI" id="CHEBI:29108"/>
        <label>1</label>
    </ligand>
</feature>
<feature type="binding site" evidence="1">
    <location>
        <position position="25"/>
    </location>
    <ligand>
        <name>Ca(2+)</name>
        <dbReference type="ChEBI" id="CHEBI:29108"/>
        <label>1</label>
    </ligand>
</feature>
<feature type="binding site" evidence="1">
    <location>
        <position position="27"/>
    </location>
    <ligand>
        <name>Ca(2+)</name>
        <dbReference type="ChEBI" id="CHEBI:29108"/>
        <label>1</label>
    </ligand>
</feature>
<feature type="binding site" evidence="1">
    <location>
        <position position="32"/>
    </location>
    <ligand>
        <name>Ca(2+)</name>
        <dbReference type="ChEBI" id="CHEBI:29108"/>
        <label>1</label>
    </ligand>
</feature>
<feature type="binding site" evidence="1">
    <location>
        <position position="57"/>
    </location>
    <ligand>
        <name>Ca(2+)</name>
        <dbReference type="ChEBI" id="CHEBI:29108"/>
        <label>2</label>
    </ligand>
</feature>
<feature type="binding site" evidence="1">
    <location>
        <position position="59"/>
    </location>
    <ligand>
        <name>Ca(2+)</name>
        <dbReference type="ChEBI" id="CHEBI:29108"/>
        <label>2</label>
    </ligand>
</feature>
<feature type="binding site" evidence="1">
    <location>
        <position position="61"/>
    </location>
    <ligand>
        <name>Ca(2+)</name>
        <dbReference type="ChEBI" id="CHEBI:29108"/>
        <label>2</label>
    </ligand>
</feature>
<feature type="binding site" evidence="1">
    <location>
        <position position="63"/>
    </location>
    <ligand>
        <name>Ca(2+)</name>
        <dbReference type="ChEBI" id="CHEBI:29108"/>
        <label>2</label>
    </ligand>
</feature>
<feature type="binding site" evidence="1">
    <location>
        <position position="68"/>
    </location>
    <ligand>
        <name>Ca(2+)</name>
        <dbReference type="ChEBI" id="CHEBI:29108"/>
        <label>2</label>
    </ligand>
</feature>
<feature type="binding site" evidence="1">
    <location>
        <position position="94"/>
    </location>
    <ligand>
        <name>Ca(2+)</name>
        <dbReference type="ChEBI" id="CHEBI:29108"/>
        <label>3</label>
    </ligand>
</feature>
<feature type="binding site" evidence="1">
    <location>
        <position position="96"/>
    </location>
    <ligand>
        <name>Ca(2+)</name>
        <dbReference type="ChEBI" id="CHEBI:29108"/>
        <label>3</label>
    </ligand>
</feature>
<feature type="binding site" evidence="1">
    <location>
        <position position="98"/>
    </location>
    <ligand>
        <name>Ca(2+)</name>
        <dbReference type="ChEBI" id="CHEBI:29108"/>
        <label>3</label>
    </ligand>
</feature>
<feature type="binding site" evidence="1">
    <location>
        <position position="105"/>
    </location>
    <ligand>
        <name>Ca(2+)</name>
        <dbReference type="ChEBI" id="CHEBI:29108"/>
        <label>3</label>
    </ligand>
</feature>
<feature type="binding site" evidence="1">
    <location>
        <position position="130"/>
    </location>
    <ligand>
        <name>Ca(2+)</name>
        <dbReference type="ChEBI" id="CHEBI:29108"/>
        <label>4</label>
    </ligand>
</feature>
<feature type="binding site" evidence="1">
    <location>
        <position position="132"/>
    </location>
    <ligand>
        <name>Ca(2+)</name>
        <dbReference type="ChEBI" id="CHEBI:29108"/>
        <label>4</label>
    </ligand>
</feature>
<feature type="binding site" evidence="1">
    <location>
        <position position="134"/>
    </location>
    <ligand>
        <name>Ca(2+)</name>
        <dbReference type="ChEBI" id="CHEBI:29108"/>
        <label>4</label>
    </ligand>
</feature>
<feature type="binding site" evidence="1">
    <location>
        <position position="136"/>
    </location>
    <ligand>
        <name>Ca(2+)</name>
        <dbReference type="ChEBI" id="CHEBI:29108"/>
        <label>4</label>
    </ligand>
</feature>
<feature type="binding site" evidence="1">
    <location>
        <position position="141"/>
    </location>
    <ligand>
        <name>Ca(2+)</name>
        <dbReference type="ChEBI" id="CHEBI:29108"/>
        <label>4</label>
    </ligand>
</feature>
<feature type="modified residue" description="N-acetylalanine" evidence="3">
    <location>
        <position position="2"/>
    </location>
</feature>
<feature type="modified residue" description="N6,N6,N6-trimethyllysine" evidence="3">
    <location>
        <position position="116"/>
    </location>
</feature>
<feature type="sequence conflict" description="In Ref. 3; AA sequence." evidence="4" ref="3">
    <original>N</original>
    <variation>D</variation>
    <location>
        <position position="61"/>
    </location>
</feature>
<feature type="sequence conflict" description="In Ref. 3; AA sequence." evidence="4" ref="3">
    <original>T</original>
    <variation>S</variation>
    <location>
        <position position="82"/>
    </location>
</feature>
<feature type="sequence conflict" description="In Ref. 2; AA sequence and 3; AA sequence." evidence="4" ref="2 3">
    <original>G</original>
    <variation>D</variation>
    <location>
        <position position="97"/>
    </location>
</feature>
<feature type="sequence conflict" description="In Ref. 3; AA sequence." evidence="4" ref="3">
    <original>N</original>
    <variation>D</variation>
    <location>
        <position position="98"/>
    </location>
</feature>
<feature type="sequence conflict" description="In Ref. 2; AA sequence and 3; AA sequence." evidence="4" ref="2 3">
    <original>G</original>
    <variation>D</variation>
    <location>
        <position position="99"/>
    </location>
</feature>
<feature type="sequence conflict" description="In Ref. 3; AA sequence." evidence="4" ref="3">
    <original>S</original>
    <variation>T</variation>
    <location>
        <position position="102"/>
    </location>
</feature>
<feature type="sequence conflict" description="In Ref. 3; AA sequence." evidence="4" ref="3">
    <location>
        <position position="145"/>
    </location>
</feature>